<organism>
    <name type="scientific">Papio anubis</name>
    <name type="common">Olive baboon</name>
    <dbReference type="NCBI Taxonomy" id="9555"/>
    <lineage>
        <taxon>Eukaryota</taxon>
        <taxon>Metazoa</taxon>
        <taxon>Chordata</taxon>
        <taxon>Craniata</taxon>
        <taxon>Vertebrata</taxon>
        <taxon>Euteleostomi</taxon>
        <taxon>Mammalia</taxon>
        <taxon>Eutheria</taxon>
        <taxon>Euarchontoglires</taxon>
        <taxon>Primates</taxon>
        <taxon>Haplorrhini</taxon>
        <taxon>Catarrhini</taxon>
        <taxon>Cercopithecidae</taxon>
        <taxon>Cercopithecinae</taxon>
        <taxon>Papio</taxon>
    </lineage>
</organism>
<comment type="function">
    <text evidence="2">Component of the cytochrome c oxidase, the last enzyme in the mitochondrial electron transport chain which drives oxidative phosphorylation. The respiratory chain contains 3 multisubunit complexes succinate dehydrogenase (complex II, CII), ubiquinol-cytochrome c oxidoreductase (cytochrome b-c1 complex, complex III, CIII) and cytochrome c oxidase (complex IV, CIV), that cooperate to transfer electrons derived from NADH and succinate to molecular oxygen, creating an electrochemical gradient over the inner membrane that drives transmembrane transport and the ATP synthase. Cytochrome c oxidase is the component of the respiratory chain that catalyzes the reduction of oxygen to water. Electrons originating from reduced cytochrome c in the intermembrane space (IMS) are transferred via the dinuclear copper A center (CU(A)) of subunit 2 and heme A of subunit 1 to the active site in subunit 1, a binuclear center (BNC) formed by heme A3 and copper B (CU(B)). The BNC reduces molecular oxygen to 2 water molecules using 4 electrons from cytochrome c in the IMS and 4 protons from the mitochondrial matrix.</text>
</comment>
<comment type="catalytic activity">
    <reaction evidence="2">
        <text>4 Fe(II)-[cytochrome c] + O2 + 8 H(+)(in) = 4 Fe(III)-[cytochrome c] + 2 H2O + 4 H(+)(out)</text>
        <dbReference type="Rhea" id="RHEA:11436"/>
        <dbReference type="Rhea" id="RHEA-COMP:10350"/>
        <dbReference type="Rhea" id="RHEA-COMP:14399"/>
        <dbReference type="ChEBI" id="CHEBI:15377"/>
        <dbReference type="ChEBI" id="CHEBI:15378"/>
        <dbReference type="ChEBI" id="CHEBI:15379"/>
        <dbReference type="ChEBI" id="CHEBI:29033"/>
        <dbReference type="ChEBI" id="CHEBI:29034"/>
        <dbReference type="EC" id="7.1.1.9"/>
    </reaction>
    <physiologicalReaction direction="left-to-right" evidence="2">
        <dbReference type="Rhea" id="RHEA:11437"/>
    </physiologicalReaction>
</comment>
<comment type="cofactor">
    <cofactor evidence="3">
        <name>Cu cation</name>
        <dbReference type="ChEBI" id="CHEBI:23378"/>
    </cofactor>
    <text evidence="3">Binds a dinuclear copper A center per subunit.</text>
</comment>
<comment type="subunit">
    <text evidence="1 3">Component of the cytochrome c oxidase (complex IV, CIV), a multisubunit enzyme composed of 14 subunits. The complex is composed of a catalytic core of 3 subunits MT-CO1, MT-CO2 and MT-CO3, encoded in the mitochondrial DNA, and 11 supernumerary subunits COX4I, COX5A, COX5B, COX6A, COX6B, COX6C, COX7A, COX7B, COX7C, COX8 and NDUFA4, which are encoded in the nuclear genome. The complex exists as a monomer or a dimer and forms supercomplexes (SCs) in the inner mitochondrial membrane with NADH-ubiquinone oxidoreductase (complex I, CI) and ubiquinol-cytochrome c oxidoreductase (cytochrome b-c1 complex, complex III, CIII), resulting in different assemblies (supercomplex SCI(1)III(2)IV(1) and megacomplex MCI(2)III(2)IV(2)) (By similarity). Found in a complex with TMEM177, COA6, COX18, COX20, SCO1 and SCO2. Interacts with TMEM177 in a COX20-dependent manner. Interacts with COX20. Interacts with COX16 (By similarity).</text>
</comment>
<comment type="subcellular location">
    <subcellularLocation>
        <location evidence="3">Mitochondrion inner membrane</location>
        <topology evidence="3">Multi-pass membrane protein</topology>
    </subcellularLocation>
</comment>
<comment type="similarity">
    <text evidence="4">Belongs to the cytochrome c oxidase subunit 2 family.</text>
</comment>
<feature type="chain" id="PRO_0000183649" description="Cytochrome c oxidase subunit 2">
    <location>
        <begin position="1"/>
        <end position="227"/>
    </location>
</feature>
<feature type="topological domain" description="Mitochondrial intermembrane" evidence="3">
    <location>
        <begin position="1"/>
        <end position="14"/>
    </location>
</feature>
<feature type="transmembrane region" description="Helical; Name=I" evidence="3">
    <location>
        <begin position="15"/>
        <end position="45"/>
    </location>
</feature>
<feature type="topological domain" description="Mitochondrial matrix" evidence="3">
    <location>
        <begin position="46"/>
        <end position="59"/>
    </location>
</feature>
<feature type="transmembrane region" description="Helical; Name=II" evidence="3">
    <location>
        <begin position="60"/>
        <end position="87"/>
    </location>
</feature>
<feature type="topological domain" description="Mitochondrial intermembrane" evidence="3">
    <location>
        <begin position="88"/>
        <end position="227"/>
    </location>
</feature>
<feature type="binding site" evidence="3">
    <location>
        <position position="161"/>
    </location>
    <ligand>
        <name>Cu cation</name>
        <dbReference type="ChEBI" id="CHEBI:23378"/>
        <label>A1</label>
    </ligand>
</feature>
<feature type="binding site" evidence="3">
    <location>
        <position position="196"/>
    </location>
    <ligand>
        <name>Cu cation</name>
        <dbReference type="ChEBI" id="CHEBI:23378"/>
        <label>A1</label>
    </ligand>
</feature>
<feature type="binding site" evidence="3">
    <location>
        <position position="196"/>
    </location>
    <ligand>
        <name>Cu cation</name>
        <dbReference type="ChEBI" id="CHEBI:23378"/>
        <label>A2</label>
    </ligand>
</feature>
<feature type="binding site" evidence="3">
    <location>
        <position position="198"/>
    </location>
    <ligand>
        <name>Cu cation</name>
        <dbReference type="ChEBI" id="CHEBI:23378"/>
        <label>A2</label>
    </ligand>
</feature>
<feature type="binding site" evidence="3">
    <location>
        <position position="198"/>
    </location>
    <ligand>
        <name>Mg(2+)</name>
        <dbReference type="ChEBI" id="CHEBI:18420"/>
        <note>ligand shared with MT-CO1</note>
    </ligand>
</feature>
<feature type="binding site" evidence="3">
    <location>
        <position position="200"/>
    </location>
    <ligand>
        <name>Cu cation</name>
        <dbReference type="ChEBI" id="CHEBI:23378"/>
        <label>A1</label>
    </ligand>
</feature>
<feature type="binding site" evidence="3">
    <location>
        <position position="200"/>
    </location>
    <ligand>
        <name>Cu cation</name>
        <dbReference type="ChEBI" id="CHEBI:23378"/>
        <label>A2</label>
    </ligand>
</feature>
<feature type="binding site" evidence="3">
    <location>
        <position position="204"/>
    </location>
    <ligand>
        <name>Cu cation</name>
        <dbReference type="ChEBI" id="CHEBI:23378"/>
        <label>A2</label>
    </ligand>
</feature>
<feature type="binding site" evidence="3">
    <location>
        <position position="207"/>
    </location>
    <ligand>
        <name>Cu cation</name>
        <dbReference type="ChEBI" id="CHEBI:23378"/>
        <label>A1</label>
    </ligand>
</feature>
<name>COX2_PAPAN</name>
<accession>P68297</accession>
<accession>P98040</accession>
<accession>Q9ZXY1</accession>
<geneLocation type="mitochondrion"/>
<dbReference type="EC" id="7.1.1.9"/>
<dbReference type="EMBL" id="M74007">
    <property type="status" value="NOT_ANNOTATED_CDS"/>
    <property type="molecule type" value="Genomic_DNA"/>
</dbReference>
<dbReference type="RefSeq" id="YP_007316886.1">
    <property type="nucleotide sequence ID" value="NC_020006.2"/>
</dbReference>
<dbReference type="SMR" id="P68297"/>
<dbReference type="Ensembl" id="ENSPANT00000065969.1">
    <property type="protein sequence ID" value="ENSPANP00000061110.1"/>
    <property type="gene ID" value="ENSPANG00000040128.1"/>
</dbReference>
<dbReference type="GeneID" id="14444632"/>
<dbReference type="KEGG" id="panu:14444632"/>
<dbReference type="CTD" id="4513"/>
<dbReference type="eggNOG" id="KOG4767">
    <property type="taxonomic scope" value="Eukaryota"/>
</dbReference>
<dbReference type="GeneTree" id="ENSGT00390000017410"/>
<dbReference type="HOGENOM" id="CLU_036876_2_3_1"/>
<dbReference type="OMA" id="WSYEYTD"/>
<dbReference type="OrthoDB" id="13737at314294"/>
<dbReference type="Proteomes" id="UP000028761">
    <property type="component" value="Mitochondrion"/>
</dbReference>
<dbReference type="GO" id="GO:0005743">
    <property type="term" value="C:mitochondrial inner membrane"/>
    <property type="evidence" value="ECO:0007669"/>
    <property type="project" value="UniProtKB-SubCell"/>
</dbReference>
<dbReference type="GO" id="GO:0005739">
    <property type="term" value="C:mitochondrion"/>
    <property type="evidence" value="ECO:0000250"/>
    <property type="project" value="UniProtKB"/>
</dbReference>
<dbReference type="GO" id="GO:0045277">
    <property type="term" value="C:respiratory chain complex IV"/>
    <property type="evidence" value="ECO:0000250"/>
    <property type="project" value="UniProtKB"/>
</dbReference>
<dbReference type="GO" id="GO:0005507">
    <property type="term" value="F:copper ion binding"/>
    <property type="evidence" value="ECO:0007669"/>
    <property type="project" value="InterPro"/>
</dbReference>
<dbReference type="GO" id="GO:0004129">
    <property type="term" value="F:cytochrome-c oxidase activity"/>
    <property type="evidence" value="ECO:0007669"/>
    <property type="project" value="UniProtKB-EC"/>
</dbReference>
<dbReference type="GO" id="GO:0042773">
    <property type="term" value="P:ATP synthesis coupled electron transport"/>
    <property type="evidence" value="ECO:0007669"/>
    <property type="project" value="TreeGrafter"/>
</dbReference>
<dbReference type="CDD" id="cd13912">
    <property type="entry name" value="CcO_II_C"/>
    <property type="match status" value="1"/>
</dbReference>
<dbReference type="FunFam" id="1.10.287.90:FF:000001">
    <property type="entry name" value="Cytochrome c oxidase subunit 2"/>
    <property type="match status" value="1"/>
</dbReference>
<dbReference type="FunFam" id="2.60.40.420:FF:000001">
    <property type="entry name" value="Cytochrome c oxidase subunit 2"/>
    <property type="match status" value="1"/>
</dbReference>
<dbReference type="Gene3D" id="1.10.287.90">
    <property type="match status" value="1"/>
</dbReference>
<dbReference type="Gene3D" id="2.60.40.420">
    <property type="entry name" value="Cupredoxins - blue copper proteins"/>
    <property type="match status" value="1"/>
</dbReference>
<dbReference type="InterPro" id="IPR045187">
    <property type="entry name" value="CcO_II"/>
</dbReference>
<dbReference type="InterPro" id="IPR002429">
    <property type="entry name" value="CcO_II-like_C"/>
</dbReference>
<dbReference type="InterPro" id="IPR034210">
    <property type="entry name" value="CcO_II_C"/>
</dbReference>
<dbReference type="InterPro" id="IPR001505">
    <property type="entry name" value="Copper_CuA"/>
</dbReference>
<dbReference type="InterPro" id="IPR008972">
    <property type="entry name" value="Cupredoxin"/>
</dbReference>
<dbReference type="InterPro" id="IPR014222">
    <property type="entry name" value="Cyt_c_oxidase_su2"/>
</dbReference>
<dbReference type="InterPro" id="IPR011759">
    <property type="entry name" value="Cyt_c_oxidase_su2_TM_dom"/>
</dbReference>
<dbReference type="InterPro" id="IPR036257">
    <property type="entry name" value="Cyt_c_oxidase_su2_TM_sf"/>
</dbReference>
<dbReference type="NCBIfam" id="TIGR02866">
    <property type="entry name" value="CoxB"/>
    <property type="match status" value="1"/>
</dbReference>
<dbReference type="PANTHER" id="PTHR22888:SF9">
    <property type="entry name" value="CYTOCHROME C OXIDASE SUBUNIT 2"/>
    <property type="match status" value="1"/>
</dbReference>
<dbReference type="PANTHER" id="PTHR22888">
    <property type="entry name" value="CYTOCHROME C OXIDASE, SUBUNIT II"/>
    <property type="match status" value="1"/>
</dbReference>
<dbReference type="Pfam" id="PF00116">
    <property type="entry name" value="COX2"/>
    <property type="match status" value="1"/>
</dbReference>
<dbReference type="Pfam" id="PF02790">
    <property type="entry name" value="COX2_TM"/>
    <property type="match status" value="1"/>
</dbReference>
<dbReference type="PRINTS" id="PR01166">
    <property type="entry name" value="CYCOXIDASEII"/>
</dbReference>
<dbReference type="SUPFAM" id="SSF49503">
    <property type="entry name" value="Cupredoxins"/>
    <property type="match status" value="1"/>
</dbReference>
<dbReference type="SUPFAM" id="SSF81464">
    <property type="entry name" value="Cytochrome c oxidase subunit II-like, transmembrane region"/>
    <property type="match status" value="1"/>
</dbReference>
<dbReference type="PROSITE" id="PS00078">
    <property type="entry name" value="COX2"/>
    <property type="match status" value="1"/>
</dbReference>
<dbReference type="PROSITE" id="PS50857">
    <property type="entry name" value="COX2_CUA"/>
    <property type="match status" value="1"/>
</dbReference>
<dbReference type="PROSITE" id="PS50999">
    <property type="entry name" value="COX2_TM"/>
    <property type="match status" value="1"/>
</dbReference>
<protein>
    <recommendedName>
        <fullName>Cytochrome c oxidase subunit 2</fullName>
        <ecNumber>7.1.1.9</ecNumber>
    </recommendedName>
    <alternativeName>
        <fullName>Cytochrome c oxidase polypeptide II</fullName>
    </alternativeName>
</protein>
<keyword id="KW-0186">Copper</keyword>
<keyword id="KW-0249">Electron transport</keyword>
<keyword id="KW-0460">Magnesium</keyword>
<keyword id="KW-0472">Membrane</keyword>
<keyword id="KW-0479">Metal-binding</keyword>
<keyword id="KW-0496">Mitochondrion</keyword>
<keyword id="KW-0999">Mitochondrion inner membrane</keyword>
<keyword id="KW-1185">Reference proteome</keyword>
<keyword id="KW-0679">Respiratory chain</keyword>
<keyword id="KW-1278">Translocase</keyword>
<keyword id="KW-0812">Transmembrane</keyword>
<keyword id="KW-1133">Transmembrane helix</keyword>
<keyword id="KW-0813">Transport</keyword>
<sequence length="227" mass="25544">MAHPVQLGLQDATSPVMEELITFHDQALMAMFLISFLILYALSSTLTTKLTNTNITDAQEMETIWTILPAVILILIALPSLRILYMTDEINNPSFTIKSIGHQWYWTYEYTDYGGLIFNSYMLPPLFLNPGDLRLLEVDNRVVLPIEAPVRMMITSQDVLHSWTIPTLGLKTDAVPGRLNQTVFTATRPGVYYGQCSEICGANHSFMPIVAELIPLKIFEMGPVFTL</sequence>
<gene>
    <name type="primary">MT-CO2</name>
    <name type="synonym">COII</name>
    <name type="synonym">COX2</name>
    <name type="synonym">COXII</name>
    <name type="synonym">MTCO2</name>
</gene>
<evidence type="ECO:0000250" key="1">
    <source>
        <dbReference type="UniProtKB" id="P00403"/>
    </source>
</evidence>
<evidence type="ECO:0000250" key="2">
    <source>
        <dbReference type="UniProtKB" id="P00410"/>
    </source>
</evidence>
<evidence type="ECO:0000250" key="3">
    <source>
        <dbReference type="UniProtKB" id="P68530"/>
    </source>
</evidence>
<evidence type="ECO:0000305" key="4"/>
<proteinExistence type="inferred from homology"/>
<reference key="1">
    <citation type="journal article" date="1992" name="Mol. Biol. Evol.">
        <title>Mitochondrial DNA phylogeny of the Old-World monkey tribe Papionini.</title>
        <authorList>
            <person name="Disotell T.R."/>
            <person name="Honeycutt R.L."/>
            <person name="Ruvolo M."/>
        </authorList>
    </citation>
    <scope>NUCLEOTIDE SEQUENCE [GENOMIC DNA]</scope>
</reference>